<comment type="function">
    <text evidence="5 6 7 8 10 11 12 13 15 17 18 19 20 21">Functions as an activating and costimulatory receptor involved in immunosurveillance upon binding to various cellular stress-inducible ligands displayed at the surface of autologous tumor cells and virus-infected cells. Provides both stimulatory and costimulatory innate immune responses on activated killer (NK) cells, leading to cytotoxic activity. Acts as a costimulatory receptor for T-cell receptor (TCR) in CD8(+) T-cell-mediated adaptive immune responses by amplifying T-cell activation. Stimulates perforin-mediated elimination of ligand-expressing tumor cells. Signaling involves calcium influx, culminating in the expression of TNF-alpha. Participates in NK cell-mediated bone marrow graft rejection. May play a regulatory role in differentiation and survival of NK cells. Binds to ligands belonging to various subfamilies of MHC class I-related glycoproteins including RAET1A, RAET1B, RAET1C, RAET1D, RAET1E, H60 and MULT1.</text>
</comment>
<comment type="subunit">
    <text evidence="1 2 9 12 13 16">Homodimer; disulfide-linked. Heterohexamer composed of two subunits of KLRK1 and four subunits of HCST/DAP10 (By similarity). Isoform 1 (via transmembrane domain) interacts with HCST/DAP10; the interaction is required for KLRK1 cell surface expression on activated CD8(+) T-cells, but is dispensable on activated TYROBP-expressing NK cells. Isoform 2 (via transmembrane domain) interacts with HCST/DAP10 (via transmembrane domain); the interaction is required for KLRK1 NK cell surface expression and induces NK cell-mediated cytotoxicity. Isoform 2 (via transmembrane domain) interacts with TYROBP (via transmembrane domain); the interaction is required for KLRK1 NK cell surface expression and induce NK cell-mediated cytotoxicity and cytokine secretion. Isoform 1 does not interact with TYROBP. Interacts with CEACAM1; recruits PTPN6 that dephosphorylates VAV1 (By similarity).</text>
</comment>
<comment type="subcellular location">
    <subcellularLocation>
        <location evidence="13 16">Cell membrane</location>
        <topology evidence="13 16">Single-pass type II membrane protein</topology>
    </subcellularLocation>
    <text>Colocalized with HCST and TYROBP on the cell surface.</text>
</comment>
<comment type="alternative products">
    <event type="alternative splicing"/>
    <isoform>
        <id>O54709-1</id>
        <name>1</name>
        <name>NKG2D long</name>
        <name>NKG2D-L</name>
        <sequence type="displayed"/>
    </isoform>
    <isoform>
        <id>O54709-2</id>
        <name>2</name>
        <name>NKG2D short</name>
        <name>NKG2D-S</name>
        <sequence type="described" ref="VSP_053945"/>
    </isoform>
    <text>A number of isoforms are produced.</text>
</comment>
<comment type="tissue specificity">
    <text evidence="6 8 10 14">Expressed in natural killer (NK) cells, activated CD8(+) alpha-beta and gamma-delta T-cells and natural killer T (NKT) cells (at protein level). May be expressed on dendritic cell (DC). Isoform 1 is strongly expressed in natural killer (NK) cells. Isoform 2 is weakly expressed in natural killer (NK) cells. Isoform 1 and isoform 2 are expressed in stimulated, but not in unstimulated, CD8(+) T-cells and macrophages.</text>
</comment>
<comment type="developmental stage">
    <text evidence="10">Expressed in NK cells from the thymus at 15 dpc (at protein level).</text>
</comment>
<comment type="induction">
    <text evidence="10 15">Up-regulated in activated CD8(+) T-cells. Up-regulated upon lipopolysaccharide (LPS) and interferon treatments in macrophages. Up-regulated in CD8(+) T-cell infiltring pancreatic islets of prediabetic nonobese diabetic (NOD) mice (at protein level). Isoform 1 and isoform 2 are up-regulated upon T-cell receptor (TCR) stimulation in CD8(+) T-cells. Isoform 1 is modestly up-regulated upon lipopolysaccharide (LPS) in macrophages. Isoform 2 is up-regulated upon lipopolysaccharide (LPS) in macrophages. Isoform 2 is up-regulated upon poly(I:C) and interleukin IL2 in natural killer (NK) cells.</text>
</comment>
<comment type="disease">
    <text evidence="15">Involved in autoreactive CD8(+) T-cell-mediated development of autoimmune diabetes.</text>
</comment>
<comment type="disruption phenotype">
    <text evidence="18 19">Mice display no visible phenotype. According to PubMed:18394936, show normal development of NK cells, B and T cells but display enhanced formation of aggressive tumors. According to PubMed:19631564, exhibit developmental perturbation in size of NK cell subpopulations, increased proliferation, faster maturation and increased sensitivity to apoptosis of immature NK cells, and lower cytolytic response to KLRK1-sensitive tumor targets.</text>
</comment>
<comment type="miscellaneous">
    <text evidence="23 24">Is not capable of signal transduction by itself; isoform 1 operates either through the signaling adapter protein HCST and isoform 2 through both HCST and TYROBP signaling adapter proteins (PubMed:12426564). Some families of ligands for mouse and human KLRK1 receptors have been characterized being very similar in structure and highly likely to be orthologs. In humans, an additional distinct subfamily of ligands (MICA and MICB) differs structurally, having an extra MHC alpha 3-like domain (PubMed:23298206).</text>
</comment>
<comment type="online information" name="Functional Glycomics Gateway - Glycan Binding">
    <link uri="http://www.functionalglycomics.org/glycomics/GBPServlet?&amp;operationType=view&amp;cbpId=cbp_mou_Ctlect_286"/>
    <text>NKG2 D</text>
</comment>
<name>NKG2D_MOUSE</name>
<evidence type="ECO:0000250" key="1"/>
<evidence type="ECO:0000250" key="2">
    <source>
        <dbReference type="UniProtKB" id="P26718"/>
    </source>
</evidence>
<evidence type="ECO:0000255" key="3"/>
<evidence type="ECO:0000255" key="4">
    <source>
        <dbReference type="PROSITE-ProRule" id="PRU00040"/>
    </source>
</evidence>
<evidence type="ECO:0000269" key="5">
    <source>
    </source>
</evidence>
<evidence type="ECO:0000269" key="6">
    <source>
    </source>
</evidence>
<evidence type="ECO:0000269" key="7">
    <source>
    </source>
</evidence>
<evidence type="ECO:0000269" key="8">
    <source>
    </source>
</evidence>
<evidence type="ECO:0000269" key="9">
    <source>
    </source>
</evidence>
<evidence type="ECO:0000269" key="10">
    <source>
    </source>
</evidence>
<evidence type="ECO:0000269" key="11">
    <source>
    </source>
</evidence>
<evidence type="ECO:0000269" key="12">
    <source>
    </source>
</evidence>
<evidence type="ECO:0000269" key="13">
    <source>
    </source>
</evidence>
<evidence type="ECO:0000269" key="14">
    <source>
    </source>
</evidence>
<evidence type="ECO:0000269" key="15">
    <source>
    </source>
</evidence>
<evidence type="ECO:0000269" key="16">
    <source>
    </source>
</evidence>
<evidence type="ECO:0000269" key="17">
    <source>
    </source>
</evidence>
<evidence type="ECO:0000269" key="18">
    <source>
    </source>
</evidence>
<evidence type="ECO:0000269" key="19">
    <source>
    </source>
</evidence>
<evidence type="ECO:0000269" key="20">
    <source>
    </source>
</evidence>
<evidence type="ECO:0000269" key="21">
    <source>
    </source>
</evidence>
<evidence type="ECO:0000303" key="22">
    <source>
    </source>
</evidence>
<evidence type="ECO:0000305" key="23">
    <source>
    </source>
</evidence>
<evidence type="ECO:0000305" key="24">
    <source>
    </source>
</evidence>
<evidence type="ECO:0007829" key="25">
    <source>
        <dbReference type="PDB" id="1HQ8"/>
    </source>
</evidence>
<evidence type="ECO:0007829" key="26">
    <source>
        <dbReference type="PDB" id="4PP8"/>
    </source>
</evidence>
<dbReference type="EMBL" id="AF054819">
    <property type="protein sequence ID" value="AAC24356.1"/>
    <property type="molecule type" value="mRNA"/>
</dbReference>
<dbReference type="EMBL" id="AF039026">
    <property type="protein sequence ID" value="AAD02117.1"/>
    <property type="molecule type" value="mRNA"/>
</dbReference>
<dbReference type="EMBL" id="BC057147">
    <property type="protein sequence ID" value="AAH57147.1"/>
    <property type="molecule type" value="mRNA"/>
</dbReference>
<dbReference type="EMBL" id="AF030313">
    <property type="protein sequence ID" value="AAC28245.1"/>
    <property type="molecule type" value="mRNA"/>
</dbReference>
<dbReference type="CCDS" id="CCDS39660.1">
    <molecule id="O54709-1"/>
</dbReference>
<dbReference type="CCDS" id="CCDS39661.1">
    <molecule id="O54709-2"/>
</dbReference>
<dbReference type="RefSeq" id="NP_001076791.1">
    <molecule id="O54709-2"/>
    <property type="nucleotide sequence ID" value="NM_001083322.2"/>
</dbReference>
<dbReference type="RefSeq" id="NP_149069.1">
    <molecule id="O54709-1"/>
    <property type="nucleotide sequence ID" value="NM_033078.4"/>
</dbReference>
<dbReference type="PDB" id="1HQ8">
    <property type="method" value="X-ray"/>
    <property type="resolution" value="1.95 A"/>
    <property type="chains" value="A=110-232"/>
</dbReference>
<dbReference type="PDB" id="4PP8">
    <property type="method" value="X-ray"/>
    <property type="resolution" value="1.95 A"/>
    <property type="chains" value="A/B=109-232"/>
</dbReference>
<dbReference type="PDBsum" id="1HQ8"/>
<dbReference type="PDBsum" id="4PP8"/>
<dbReference type="SMR" id="O54709"/>
<dbReference type="BioGRID" id="205095">
    <property type="interactions" value="3"/>
</dbReference>
<dbReference type="FunCoup" id="O54709">
    <property type="interactions" value="243"/>
</dbReference>
<dbReference type="IntAct" id="O54709">
    <property type="interactions" value="1"/>
</dbReference>
<dbReference type="STRING" id="10090.ENSMUSP00000032252"/>
<dbReference type="GlyCosmos" id="O54709">
    <property type="glycosylation" value="3 sites, No reported glycans"/>
</dbReference>
<dbReference type="GlyGen" id="O54709">
    <property type="glycosylation" value="3 sites"/>
</dbReference>
<dbReference type="iPTMnet" id="O54709"/>
<dbReference type="PhosphoSitePlus" id="O54709"/>
<dbReference type="PaxDb" id="10090-ENSMUSP00000032252"/>
<dbReference type="ProteomicsDB" id="293667">
    <molecule id="O54709-1"/>
</dbReference>
<dbReference type="ProteomicsDB" id="293668">
    <molecule id="O54709-2"/>
</dbReference>
<dbReference type="ABCD" id="O54709">
    <property type="antibodies" value="2 sequenced antibodies"/>
</dbReference>
<dbReference type="Antibodypedia" id="23295">
    <property type="antibodies" value="767 antibodies from 38 providers"/>
</dbReference>
<dbReference type="DNASU" id="27007"/>
<dbReference type="Ensembl" id="ENSMUST00000032252.8">
    <molecule id="O54709-1"/>
    <property type="protein sequence ID" value="ENSMUSP00000032252.6"/>
    <property type="gene ID" value="ENSMUSG00000030149.16"/>
</dbReference>
<dbReference type="Ensembl" id="ENSMUST00000095412.10">
    <molecule id="O54709-2"/>
    <property type="protein sequence ID" value="ENSMUSP00000093061.5"/>
    <property type="gene ID" value="ENSMUSG00000030149.16"/>
</dbReference>
<dbReference type="GeneID" id="27007"/>
<dbReference type="KEGG" id="mmu:27007"/>
<dbReference type="UCSC" id="uc009egf.2">
    <molecule id="O54709-1"/>
    <property type="organism name" value="mouse"/>
</dbReference>
<dbReference type="AGR" id="MGI:1196250"/>
<dbReference type="CTD" id="22914"/>
<dbReference type="MGI" id="MGI:1196250">
    <property type="gene designation" value="Klrk1"/>
</dbReference>
<dbReference type="VEuPathDB" id="HostDB:ENSMUSG00000030149"/>
<dbReference type="eggNOG" id="KOG4297">
    <property type="taxonomic scope" value="Eukaryota"/>
</dbReference>
<dbReference type="GeneTree" id="ENSGT00940000154558"/>
<dbReference type="HOGENOM" id="CLU_049894_9_1_1"/>
<dbReference type="InParanoid" id="O54709"/>
<dbReference type="OMA" id="DRWAHHS"/>
<dbReference type="OrthoDB" id="2142683at2759"/>
<dbReference type="PhylomeDB" id="O54709"/>
<dbReference type="TreeFam" id="TF336674"/>
<dbReference type="Reactome" id="R-MMU-198933">
    <property type="pathway name" value="Immunoregulatory interactions between a Lymphoid and a non-Lymphoid cell"/>
</dbReference>
<dbReference type="Reactome" id="R-MMU-2424491">
    <property type="pathway name" value="DAP12 signaling"/>
</dbReference>
<dbReference type="BioGRID-ORCS" id="27007">
    <property type="hits" value="3 hits in 78 CRISPR screens"/>
</dbReference>
<dbReference type="ChiTaRS" id="Klrk1">
    <property type="organism name" value="mouse"/>
</dbReference>
<dbReference type="EvolutionaryTrace" id="O54709"/>
<dbReference type="PRO" id="PR:O54709"/>
<dbReference type="Proteomes" id="UP000000589">
    <property type="component" value="Chromosome 6"/>
</dbReference>
<dbReference type="RNAct" id="O54709">
    <property type="molecule type" value="protein"/>
</dbReference>
<dbReference type="Bgee" id="ENSMUSG00000030149">
    <property type="expression patterns" value="Expressed in skin of snout and 76 other cell types or tissues"/>
</dbReference>
<dbReference type="ExpressionAtlas" id="O54709">
    <property type="expression patterns" value="baseline and differential"/>
</dbReference>
<dbReference type="GO" id="GO:0009986">
    <property type="term" value="C:cell surface"/>
    <property type="evidence" value="ECO:0000314"/>
    <property type="project" value="MGI"/>
</dbReference>
<dbReference type="GO" id="GO:0009897">
    <property type="term" value="C:external side of plasma membrane"/>
    <property type="evidence" value="ECO:0000314"/>
    <property type="project" value="MGI"/>
</dbReference>
<dbReference type="GO" id="GO:0005886">
    <property type="term" value="C:plasma membrane"/>
    <property type="evidence" value="ECO:0000304"/>
    <property type="project" value="Reactome"/>
</dbReference>
<dbReference type="GO" id="GO:0030246">
    <property type="term" value="F:carbohydrate binding"/>
    <property type="evidence" value="ECO:0007669"/>
    <property type="project" value="UniProtKB-KW"/>
</dbReference>
<dbReference type="GO" id="GO:0042802">
    <property type="term" value="F:identical protein binding"/>
    <property type="evidence" value="ECO:0000353"/>
    <property type="project" value="MGI"/>
</dbReference>
<dbReference type="GO" id="GO:0019900">
    <property type="term" value="F:kinase binding"/>
    <property type="evidence" value="ECO:0000353"/>
    <property type="project" value="UniProtKB"/>
</dbReference>
<dbReference type="GO" id="GO:0042288">
    <property type="term" value="F:MHC class I protein binding"/>
    <property type="evidence" value="ECO:0000353"/>
    <property type="project" value="MGI"/>
</dbReference>
<dbReference type="GO" id="GO:0032394">
    <property type="term" value="F:MHC class Ib receptor activity"/>
    <property type="evidence" value="ECO:0000315"/>
    <property type="project" value="MGI"/>
</dbReference>
<dbReference type="GO" id="GO:0002250">
    <property type="term" value="P:adaptive immune response"/>
    <property type="evidence" value="ECO:0007669"/>
    <property type="project" value="UniProtKB-KW"/>
</dbReference>
<dbReference type="GO" id="GO:0030154">
    <property type="term" value="P:cell differentiation"/>
    <property type="evidence" value="ECO:0007669"/>
    <property type="project" value="UniProtKB-KW"/>
</dbReference>
<dbReference type="GO" id="GO:0071222">
    <property type="term" value="P:cellular response to lipopolysaccharide"/>
    <property type="evidence" value="ECO:0000314"/>
    <property type="project" value="MGI"/>
</dbReference>
<dbReference type="GO" id="GO:0050830">
    <property type="term" value="P:defense response to Gram-positive bacterium"/>
    <property type="evidence" value="ECO:0000314"/>
    <property type="project" value="MGI"/>
</dbReference>
<dbReference type="GO" id="GO:0030101">
    <property type="term" value="P:natural killer cell activation"/>
    <property type="evidence" value="ECO:0000315"/>
    <property type="project" value="MGI"/>
</dbReference>
<dbReference type="GO" id="GO:0042267">
    <property type="term" value="P:natural killer cell mediated cytotoxicity"/>
    <property type="evidence" value="ECO:0007669"/>
    <property type="project" value="Ensembl"/>
</dbReference>
<dbReference type="GO" id="GO:2000502">
    <property type="term" value="P:negative regulation of natural killer cell chemotaxis"/>
    <property type="evidence" value="ECO:0007669"/>
    <property type="project" value="Ensembl"/>
</dbReference>
<dbReference type="GO" id="GO:0006809">
    <property type="term" value="P:nitric oxide biosynthetic process"/>
    <property type="evidence" value="ECO:0000314"/>
    <property type="project" value="MGI"/>
</dbReference>
<dbReference type="GO" id="GO:0045954">
    <property type="term" value="P:positive regulation of natural killer cell mediated cytotoxicity"/>
    <property type="evidence" value="ECO:0000314"/>
    <property type="project" value="UniProtKB"/>
</dbReference>
<dbReference type="GO" id="GO:0045429">
    <property type="term" value="P:positive regulation of nitric oxide biosynthetic process"/>
    <property type="evidence" value="ECO:0000314"/>
    <property type="project" value="MGI"/>
</dbReference>
<dbReference type="GO" id="GO:0032729">
    <property type="term" value="P:positive regulation of type II interferon production"/>
    <property type="evidence" value="ECO:0000314"/>
    <property type="project" value="MGI"/>
</dbReference>
<dbReference type="GO" id="GO:0002223">
    <property type="term" value="P:stimulatory C-type lectin receptor signaling pathway"/>
    <property type="evidence" value="ECO:0000315"/>
    <property type="project" value="MGI"/>
</dbReference>
<dbReference type="CDD" id="cd03593">
    <property type="entry name" value="CLECT_NK_receptors_like"/>
    <property type="match status" value="1"/>
</dbReference>
<dbReference type="FunFam" id="3.10.100.10:FF:000055">
    <property type="entry name" value="NKG2-D type II integral membrane protein"/>
    <property type="match status" value="1"/>
</dbReference>
<dbReference type="Gene3D" id="3.10.100.10">
    <property type="entry name" value="Mannose-Binding Protein A, subunit A"/>
    <property type="match status" value="1"/>
</dbReference>
<dbReference type="InterPro" id="IPR001304">
    <property type="entry name" value="C-type_lectin-like"/>
</dbReference>
<dbReference type="InterPro" id="IPR016186">
    <property type="entry name" value="C-type_lectin-like/link_sf"/>
</dbReference>
<dbReference type="InterPro" id="IPR016187">
    <property type="entry name" value="CTDL_fold"/>
</dbReference>
<dbReference type="InterPro" id="IPR042169">
    <property type="entry name" value="NKG2D"/>
</dbReference>
<dbReference type="InterPro" id="IPR033992">
    <property type="entry name" value="NKR-like_CTLD"/>
</dbReference>
<dbReference type="PANTHER" id="PTHR47494">
    <property type="entry name" value="NKG2-D TYPE II INTEGRAL MEMBRANE PROTEIN"/>
    <property type="match status" value="1"/>
</dbReference>
<dbReference type="PANTHER" id="PTHR47494:SF1">
    <property type="entry name" value="NKG2-D TYPE II INTEGRAL MEMBRANE PROTEIN"/>
    <property type="match status" value="1"/>
</dbReference>
<dbReference type="Pfam" id="PF00059">
    <property type="entry name" value="Lectin_C"/>
    <property type="match status" value="1"/>
</dbReference>
<dbReference type="SMART" id="SM00034">
    <property type="entry name" value="CLECT"/>
    <property type="match status" value="1"/>
</dbReference>
<dbReference type="SUPFAM" id="SSF56436">
    <property type="entry name" value="C-type lectin-like"/>
    <property type="match status" value="1"/>
</dbReference>
<dbReference type="PROSITE" id="PS50041">
    <property type="entry name" value="C_TYPE_LECTIN_2"/>
    <property type="match status" value="1"/>
</dbReference>
<gene>
    <name type="primary">Klrk1</name>
    <name type="synonym">Nkg2d</name>
</gene>
<accession>O54709</accession>
<organism>
    <name type="scientific">Mus musculus</name>
    <name type="common">Mouse</name>
    <dbReference type="NCBI Taxonomy" id="10090"/>
    <lineage>
        <taxon>Eukaryota</taxon>
        <taxon>Metazoa</taxon>
        <taxon>Chordata</taxon>
        <taxon>Craniata</taxon>
        <taxon>Vertebrata</taxon>
        <taxon>Euteleostomi</taxon>
        <taxon>Mammalia</taxon>
        <taxon>Eutheria</taxon>
        <taxon>Euarchontoglires</taxon>
        <taxon>Glires</taxon>
        <taxon>Rodentia</taxon>
        <taxon>Myomorpha</taxon>
        <taxon>Muroidea</taxon>
        <taxon>Muridae</taxon>
        <taxon>Murinae</taxon>
        <taxon>Mus</taxon>
        <taxon>Mus</taxon>
    </lineage>
</organism>
<reference key="1">
    <citation type="journal article" date="1998" name="Proc. Natl. Acad. Sci. U.S.A.">
        <title>Murine Nkg2d and Cd94 are clustered within the natural killer complex and are expressed independently in natural killer cells.</title>
        <authorList>
            <person name="Ho E.L."/>
            <person name="Heusel J.W."/>
            <person name="Brown M.G."/>
            <person name="Matsumoto K."/>
            <person name="Scalzo A.A."/>
            <person name="Yokoyama W.M."/>
        </authorList>
    </citation>
    <scope>NUCLEOTIDE SEQUENCE [MRNA] (ISOFORM 1)</scope>
    <source>
        <strain>C57BL/6J</strain>
    </source>
</reference>
<reference key="2">
    <citation type="submission" date="1997-12" db="EMBL/GenBank/DDBJ databases">
        <title>Mouse natural killer cell receptors homologous to human CD94 and NKG2-D.</title>
        <authorList>
            <person name="Butcher S."/>
            <person name="Cottage A."/>
            <person name="Cook G.P."/>
        </authorList>
    </citation>
    <scope>NUCLEOTIDE SEQUENCE [MRNA] (ISOFORM 1)</scope>
    <source>
        <strain>C57BL/6J</strain>
        <tissue>Spleen</tissue>
    </source>
</reference>
<reference key="3">
    <citation type="journal article" date="2004" name="Genome Res.">
        <title>The status, quality, and expansion of the NIH full-length cDNA project: the Mammalian Gene Collection (MGC).</title>
        <authorList>
            <consortium name="The MGC Project Team"/>
        </authorList>
    </citation>
    <scope>NUCLEOTIDE SEQUENCE [LARGE SCALE MRNA] (ISOFORM 1)</scope>
    <source>
        <strain>NMRI</strain>
        <tissue>Mammary tumor</tissue>
    </source>
</reference>
<reference key="4">
    <citation type="journal article" date="1997" name="Eur. J. Immunol.">
        <title>Cloning of a mouse homolog of CD94 extends the family of C-type lectins on murine natural killer cells.</title>
        <authorList>
            <person name="Vance R.E."/>
            <person name="Tanamachi D.M."/>
            <person name="Hanke T."/>
            <person name="Raulet D.H."/>
        </authorList>
    </citation>
    <scope>NUCLEOTIDE SEQUENCE [MRNA] (ISOFORM 2)</scope>
    <source>
        <strain>C57BL/6J</strain>
    </source>
</reference>
<reference key="5">
    <citation type="journal article" date="2000" name="Immunity">
        <title>Retinoic acid early inducible genes define a ligand family for the activating NKG2D receptor in mice.</title>
        <authorList>
            <person name="Cerwenka A."/>
            <person name="Bakker A.B."/>
            <person name="McClanahan T."/>
            <person name="Wagner J."/>
            <person name="Wu J."/>
            <person name="Phillips J.H."/>
            <person name="Lanier L.L."/>
        </authorList>
    </citation>
    <scope>FUNCTION IN CYTOTOXICITY ACTIVATION</scope>
    <scope>FUNCTION AS A RECEPTOR FOR RAET1A; RAET1B; RAET1C; RAET1D AND H60</scope>
</reference>
<reference key="6">
    <citation type="journal article" date="2000" name="Nat. Immunol.">
        <title>Ligands for the murine NKG2D receptor: expression by tumor cells and activation of NK cells and macrophages.</title>
        <authorList>
            <person name="Diefenbach A."/>
            <person name="Jamieson A.M."/>
            <person name="Liu S.D."/>
            <person name="Shastri N."/>
            <person name="Raulet D.H."/>
        </authorList>
    </citation>
    <scope>FUNCTION IN CYTOTOXICITY ACTIVATION</scope>
    <scope>FUNCTION AS A RECEPTOR FOR RAET1B AND H60</scope>
    <scope>TISSUE SPECIFICITY</scope>
</reference>
<reference key="7">
    <citation type="journal article" date="2001" name="Nature">
        <title>Rae1 and H60 ligands of the NKG2D receptor stimulate tumour immunity.</title>
        <authorList>
            <person name="Diefenbach A."/>
            <person name="Jensen E.R."/>
            <person name="Jamieson A.M."/>
            <person name="Raulet D.H."/>
        </authorList>
    </citation>
    <scope>FUNCTION IN CYTOTOXICITY ACTIVATION</scope>
    <scope>FUNCTION AS A RECEPTOR FOR RAET1B AND H60</scope>
</reference>
<reference key="8">
    <citation type="journal article" date="2001" name="Science">
        <title>Regulation of cutaneous malignancy by gammadelta T cells.</title>
        <authorList>
            <person name="Girardi M."/>
            <person name="Oppenheim D.E."/>
            <person name="Steele C.R."/>
            <person name="Lewis J.M."/>
            <person name="Glusac E."/>
            <person name="Filler R."/>
            <person name="Hobby P."/>
            <person name="Sutton B."/>
            <person name="Tigelaar R.E."/>
            <person name="Hayday A.C."/>
        </authorList>
    </citation>
    <scope>FUNCTION IN CYTOTOXICITY ACTIVATION</scope>
    <scope>FUNCTION AS A RECEPTOR FOR RAET1E</scope>
    <scope>TISSUE SPECIFICITY</scope>
</reference>
<reference key="9">
    <citation type="journal article" date="2002" name="Immunity">
        <title>The role of the NKG2D immunoreceptor in immune cell activation and natural killing.</title>
        <authorList>
            <person name="Jamieson A.M."/>
            <person name="Diefenbach A."/>
            <person name="McMahon C.W."/>
            <person name="Xiong N."/>
            <person name="Carlyle J.R."/>
            <person name="Raulet D.H."/>
        </authorList>
    </citation>
    <scope>FUNCTION IN CYTOTOXICITY ACTIVATION</scope>
    <scope>INDUCTION</scope>
    <scope>TISSUE SPECIFICITY</scope>
    <scope>DEVELOPMENTAL STAGE</scope>
</reference>
<reference key="10">
    <citation type="journal article" date="2002" name="J. Immunol.">
        <title>Murine UL16-binding protein-like transcript 1: a newly described transcript encoding a high-affinity ligand for murine NKG2D.</title>
        <authorList>
            <person name="Carayannopoulos L.N."/>
            <person name="Naidenko O.V."/>
            <person name="Fremont D.H."/>
            <person name="Yokoyama W.M."/>
        </authorList>
    </citation>
    <scope>FUNCTION AS A RECEPTOR FOR MULT1</scope>
</reference>
<reference key="11">
    <citation type="journal article" date="2002" name="Curr. Opin. Immunol.">
        <title>Lymphocyte activation via NKG2D: towards a new paradigm in immune recognition?</title>
        <authorList>
            <person name="Vivier E."/>
            <person name="Tomasello E."/>
            <person name="Paul P."/>
        </authorList>
    </citation>
    <scope>REVIEW</scope>
    <scope>ALTERNATIVE SPLICING</scope>
</reference>
<reference key="12">
    <citation type="journal article" date="2002" name="Nat. Immunol.">
        <title>Selective associations with signaling proteins determine stimulatory versus costimulatory activity of NKG2D.</title>
        <authorList>
            <person name="Diefenbach A."/>
            <person name="Tomasello E."/>
            <person name="Lucas M."/>
            <person name="Jamieson A.M."/>
            <person name="Hsia J.K."/>
            <person name="Vivier E."/>
            <person name="Raulet D.H."/>
        </authorList>
    </citation>
    <scope>FUNCTION</scope>
    <scope>ALTERNATIVE SPLICING (ISOFORMS 1 AND 2)</scope>
    <scope>SUBCELLULAR LOCATION</scope>
    <scope>INTERACTION WITH HCST AND TYROBP</scope>
</reference>
<reference key="13">
    <citation type="journal article" date="2002" name="Nat. Immunol.">
        <title>NKG2D recruits two distinct adapters to trigger NK cell activation and costimulation.</title>
        <authorList>
            <person name="Gilfillan S."/>
            <person name="Ho E.L."/>
            <person name="Cella M."/>
            <person name="Yokoyama W.M."/>
            <person name="Colonna M."/>
        </authorList>
    </citation>
    <scope>FUNCTION IN CYTOTOXICITY ACTIVATION</scope>
    <scope>INTERACTION WITH TYROBP</scope>
</reference>
<reference key="14">
    <citation type="journal article" date="2004" name="Eur. J. Immunol.">
        <title>Involvement of NKR-P2/NKG2D in DC-mediated killing of tumor targets: indicative of a common, innate, target-recognition paradigm?</title>
        <authorList>
            <person name="Alli R."/>
            <person name="Savithri B."/>
            <person name="Das S."/>
            <person name="Varalakshmi C."/>
            <person name="Rangaraj N."/>
            <person name="Khar A."/>
        </authorList>
    </citation>
    <scope>TISSUE SPECIFICITY</scope>
</reference>
<reference key="15">
    <citation type="journal article" date="2004" name="Immunity">
        <title>NKG2D blockade prevents autoimmune diabetes in NOD mice.</title>
        <authorList>
            <person name="Ogasawara K."/>
            <person name="Hamerman J.A."/>
            <person name="Ehrlich L.R."/>
            <person name="Bour-Jordan H."/>
            <person name="Santamaria P."/>
            <person name="Bluestone J.A."/>
            <person name="Lanier L.L."/>
        </authorList>
    </citation>
    <scope>FUNCTION</scope>
    <scope>INVOLVEMENT IN AUTOIMMUNE DIABETES</scope>
    <scope>INDUCTION</scope>
</reference>
<reference key="16">
    <citation type="journal article" date="2004" name="J. Immunol.">
        <title>A Structural basis for the association of DAP12 with mouse, but not human, NKG2D.</title>
        <authorList>
            <person name="Rosen D.B."/>
            <person name="Araki M."/>
            <person name="Hamerman J.A."/>
            <person name="Chen T."/>
            <person name="Yamamura T."/>
            <person name="Lanier L.L."/>
        </authorList>
    </citation>
    <scope>ALTERNATIVE SPLICING (ISOFORMS 1 AND 2)</scope>
    <scope>INTERACTION WITH HCST AND TYROBP</scope>
    <scope>SUBCELLULAR LOCATION</scope>
</reference>
<reference key="17">
    <citation type="journal article" date="2005" name="Nat. Immunol.">
        <title>Function of NKG2D in natural killer cell-mediated rejection of mouse bone marrow grafts.</title>
        <authorList>
            <person name="Ogasawara K."/>
            <person name="Benjamin J."/>
            <person name="Takaki R."/>
            <person name="Phillips J.H."/>
            <person name="Lanier L.L."/>
        </authorList>
    </citation>
    <scope>FUNCTION IN IMMUNITY AND ALLOGRAFT REJECTION</scope>
    <scope>FUNCTION AS A RECEPTOR FOR RAET1E</scope>
</reference>
<reference key="18">
    <citation type="journal article" date="2008" name="Immunity">
        <title>NKG2D-deficient mice are defective in tumor surveillance in models of spontaneous malignancy.</title>
        <authorList>
            <person name="Guerra N."/>
            <person name="Tan Y.X."/>
            <person name="Joncker N.T."/>
            <person name="Choy A."/>
            <person name="Gallardo F."/>
            <person name="Xiong N."/>
            <person name="Knoblaugh S."/>
            <person name="Cado D."/>
            <person name="Greenberg N.M."/>
            <person name="Greenberg N.R."/>
            <person name="Raulet D.H."/>
        </authorList>
    </citation>
    <scope>FUNCTION IN TUMOR SURVEILLANCE</scope>
    <scope>DISRUPTION PHENOTYPE</scope>
</reference>
<reference key="19">
    <citation type="journal article" date="2009" name="Immunity">
        <title>The phagosomal proteome in interferon-gamma-activated macrophages.</title>
        <authorList>
            <person name="Trost M."/>
            <person name="English L."/>
            <person name="Lemieux S."/>
            <person name="Courcelles M."/>
            <person name="Desjardins M."/>
            <person name="Thibault P."/>
        </authorList>
    </citation>
    <scope>IDENTIFICATION BY MASS SPECTROMETRY [LARGE SCALE ANALYSIS]</scope>
</reference>
<reference key="20">
    <citation type="journal article" date="2009" name="Immunity">
        <title>Altered NK cell development and enhanced NK cell-mediated resistance to mouse cytomegalovirus in NKG2D-deficient mice.</title>
        <authorList>
            <person name="Zafirova B."/>
            <person name="Mandaric S."/>
            <person name="Antulov R."/>
            <person name="Krmpotic A."/>
            <person name="Jonsson H."/>
            <person name="Yokoyama W.M."/>
            <person name="Jonjic S."/>
            <person name="Polic B."/>
        </authorList>
    </citation>
    <scope>FUNCTION IN NK CELL DIFFERENTIATION</scope>
    <scope>DISRUPTION PHENOTYPE</scope>
</reference>
<reference key="21">
    <citation type="journal article" date="2011" name="Cell. Mol. Life Sci.">
        <title>Regulation of immune cell function and differentiation by the NKG2D receptor.</title>
        <authorList>
            <person name="Zafirova B."/>
            <person name="Wensveen F.M."/>
            <person name="Gulin M."/>
            <person name="Polic B."/>
        </authorList>
    </citation>
    <scope>REVIEW</scope>
    <scope>FUNCTION</scope>
</reference>
<reference key="22">
    <citation type="journal article" date="2013" name="Annu. Rev. Immunol.">
        <title>Regulation of ligands for the NKG2D activating receptor.</title>
        <authorList>
            <person name="Raulet D.H."/>
            <person name="Gasser S."/>
            <person name="Gowen B.G."/>
            <person name="Deng W."/>
            <person name="Jung H."/>
        </authorList>
    </citation>
    <scope>REVIEW</scope>
    <scope>FUNCTION AS A RECEPTOR FOR MHC CLASS I-RELATED GLYCOPROTEINS</scope>
</reference>
<reference key="23">
    <citation type="journal article" date="2001" name="Nat. Immunol.">
        <title>Crystal structure of the murine NK cell-activating receptor NKG2D at 1.95 A.</title>
        <authorList>
            <person name="Wolan D.W."/>
            <person name="Teyton L."/>
            <person name="Rudolph M.G."/>
            <person name="Villmow B."/>
            <person name="Bauer S."/>
            <person name="Busch D.H."/>
            <person name="Wilson I.A."/>
        </authorList>
    </citation>
    <scope>X-RAY CRYSTALLOGRAPHY (1.95 ANGSTROMS) OF 110-232</scope>
</reference>
<reference key="24">
    <citation type="journal article" date="2002" name="Immunity">
        <title>Crystal structures of RAE-1beta and its complex with the activating immunoreceptor NKG2D.</title>
        <authorList>
            <person name="Li P."/>
            <person name="McDermott G."/>
            <person name="Strong R.K."/>
        </authorList>
    </citation>
    <scope>X-RAY CRYSTALLOGRAPHY (1.95 ANGSTROMS) OF 110-232 IN COMPLEX WITH RAET1B</scope>
</reference>
<proteinExistence type="evidence at protein level"/>
<feature type="chain" id="PRO_0000046668" description="NKG2-D type II integral membrane protein">
    <location>
        <begin position="1"/>
        <end position="232"/>
    </location>
</feature>
<feature type="topological domain" description="Cytoplasmic" evidence="3">
    <location>
        <begin position="1"/>
        <end position="66"/>
    </location>
</feature>
<feature type="transmembrane region" description="Helical; Signal-anchor for type II membrane protein" evidence="3">
    <location>
        <begin position="67"/>
        <end position="89"/>
    </location>
</feature>
<feature type="topological domain" description="Extracellular" evidence="3">
    <location>
        <begin position="90"/>
        <end position="232"/>
    </location>
</feature>
<feature type="domain" description="C-type lectin" evidence="4">
    <location>
        <begin position="122"/>
        <end position="228"/>
    </location>
</feature>
<feature type="glycosylation site" description="N-linked (GlcNAc...) asparagine" evidence="3">
    <location>
        <position position="137"/>
    </location>
</feature>
<feature type="glycosylation site" description="N-linked (GlcNAc...) asparagine" evidence="3">
    <location>
        <position position="147"/>
    </location>
</feature>
<feature type="glycosylation site" description="N-linked (GlcNAc...) asparagine" evidence="3">
    <location>
        <position position="179"/>
    </location>
</feature>
<feature type="disulfide bond">
    <location>
        <begin position="112"/>
        <end position="121"/>
    </location>
</feature>
<feature type="disulfide bond">
    <location>
        <begin position="115"/>
        <end position="126"/>
    </location>
</feature>
<feature type="disulfide bond">
    <location>
        <begin position="143"/>
        <end position="227"/>
    </location>
</feature>
<feature type="disulfide bond">
    <location>
        <begin position="205"/>
        <end position="219"/>
    </location>
</feature>
<feature type="splice variant" id="VSP_053945" description="In isoform 2." evidence="22">
    <location>
        <begin position="1"/>
        <end position="13"/>
    </location>
</feature>
<feature type="strand" evidence="26">
    <location>
        <begin position="110"/>
        <end position="112"/>
    </location>
</feature>
<feature type="strand" evidence="25">
    <location>
        <begin position="120"/>
        <end position="122"/>
    </location>
</feature>
<feature type="strand" evidence="25">
    <location>
        <begin position="125"/>
        <end position="134"/>
    </location>
</feature>
<feature type="helix" evidence="25">
    <location>
        <begin position="136"/>
        <end position="144"/>
    </location>
</feature>
<feature type="turn" evidence="25">
    <location>
        <begin position="145"/>
        <end position="147"/>
    </location>
</feature>
<feature type="turn" evidence="25">
    <location>
        <begin position="156"/>
        <end position="159"/>
    </location>
</feature>
<feature type="helix" evidence="25">
    <location>
        <begin position="160"/>
        <end position="164"/>
    </location>
</feature>
<feature type="strand" evidence="25">
    <location>
        <begin position="169"/>
        <end position="175"/>
    </location>
</feature>
<feature type="turn" evidence="25">
    <location>
        <begin position="177"/>
        <end position="179"/>
    </location>
</feature>
<feature type="strand" evidence="25">
    <location>
        <begin position="182"/>
        <end position="184"/>
    </location>
</feature>
<feature type="turn" evidence="25">
    <location>
        <begin position="192"/>
        <end position="194"/>
    </location>
</feature>
<feature type="strand" evidence="25">
    <location>
        <begin position="196"/>
        <end position="198"/>
    </location>
</feature>
<feature type="strand" evidence="25">
    <location>
        <begin position="205"/>
        <end position="208"/>
    </location>
</feature>
<feature type="strand" evidence="25">
    <location>
        <begin position="213"/>
        <end position="217"/>
    </location>
</feature>
<feature type="strand" evidence="25">
    <location>
        <begin position="223"/>
        <end position="229"/>
    </location>
</feature>
<sequence>MALIRDRKSHHSEMSKCHNYDLKPAKWDTSQEQQKQRLALTTSQPGENGIIRGRYPIEKLKISPMFVVRVLAIALAIRFTLNTLMWLAIFKETFQPVLCNKEVPVSSREGYCGPCPNNWICHRNNCYQFFNEEKTWNQSQASCLSQNSSLLKIYSKEEQDFLKLVKSYHWMGLVQIPANGSWQWEDGSSLSYNQLTLVEIPKGSCAVYGSSFKAYTEDCANLNTYICMKRAV</sequence>
<protein>
    <recommendedName>
        <fullName>NKG2-D type II integral membrane protein</fullName>
    </recommendedName>
    <alternativeName>
        <fullName>Killer cell lectin-like receptor subfamily K member 1</fullName>
    </alternativeName>
    <alternativeName>
        <fullName>NK cell receptor D</fullName>
    </alternativeName>
    <alternativeName>
        <fullName>NKG2-D-activating NK receptor</fullName>
    </alternativeName>
    <cdAntigenName>CD314</cdAntigenName>
</protein>
<keyword id="KW-0002">3D-structure</keyword>
<keyword id="KW-1064">Adaptive immunity</keyword>
<keyword id="KW-0025">Alternative splicing</keyword>
<keyword id="KW-1003">Cell membrane</keyword>
<keyword id="KW-0221">Differentiation</keyword>
<keyword id="KW-1015">Disulfide bond</keyword>
<keyword id="KW-0325">Glycoprotein</keyword>
<keyword id="KW-0391">Immunity</keyword>
<keyword id="KW-0399">Innate immunity</keyword>
<keyword id="KW-0430">Lectin</keyword>
<keyword id="KW-0472">Membrane</keyword>
<keyword id="KW-0675">Receptor</keyword>
<keyword id="KW-1185">Reference proteome</keyword>
<keyword id="KW-0735">Signal-anchor</keyword>
<keyword id="KW-0812">Transmembrane</keyword>
<keyword id="KW-1133">Transmembrane helix</keyword>